<reference key="1">
    <citation type="journal article" date="2007" name="Lett. Appl. Microbiol.">
        <title>Toluene-induced accumulation of trehalose by Pseudomonas sp. BCNU 106 through the expression of otsA and otsB homologues.</title>
        <authorList>
            <person name="Park H.C."/>
            <person name="Bae Y.U."/>
            <person name="Cho S.D."/>
            <person name="Kim S.A."/>
            <person name="Moon J.Y."/>
            <person name="Ha K.C."/>
            <person name="Kim D.W."/>
            <person name="Lee K."/>
            <person name="Jeong Y.K."/>
            <person name="Kwack D.O."/>
            <person name="Heo J.S."/>
            <person name="Lee Y.G."/>
            <person name="Joo W.H."/>
        </authorList>
    </citation>
    <scope>NUCLEOTIDE SEQUENCE [GENOMIC DNA]</scope>
    <source>
        <strain>BCNU 106</strain>
    </source>
</reference>
<accession>Q6JTB2</accession>
<dbReference type="EC" id="2.4.1.15" evidence="1"/>
<dbReference type="EMBL" id="AY308798">
    <property type="protein sequence ID" value="AAQ76839.1"/>
    <property type="molecule type" value="Genomic_DNA"/>
</dbReference>
<dbReference type="SMR" id="Q6JTB2"/>
<dbReference type="CAZy" id="GT20">
    <property type="family name" value="Glycosyltransferase Family 20"/>
</dbReference>
<dbReference type="UniPathway" id="UPA00299"/>
<dbReference type="GO" id="GO:0003825">
    <property type="term" value="F:alpha,alpha-trehalose-phosphate synthase (UDP-forming) activity"/>
    <property type="evidence" value="ECO:0007669"/>
    <property type="project" value="UniProtKB-EC"/>
</dbReference>
<dbReference type="GO" id="GO:0005992">
    <property type="term" value="P:trehalose biosynthetic process"/>
    <property type="evidence" value="ECO:0007669"/>
    <property type="project" value="UniProtKB-UniPathway"/>
</dbReference>
<dbReference type="CDD" id="cd03788">
    <property type="entry name" value="GT20_TPS"/>
    <property type="match status" value="1"/>
</dbReference>
<dbReference type="FunFam" id="3.40.50.2000:FF:000024">
    <property type="entry name" value="Trehalose-6-phosphate synthase"/>
    <property type="match status" value="1"/>
</dbReference>
<dbReference type="Gene3D" id="3.40.50.2000">
    <property type="entry name" value="Glycogen Phosphorylase B"/>
    <property type="match status" value="2"/>
</dbReference>
<dbReference type="InterPro" id="IPR001830">
    <property type="entry name" value="Glyco_trans_20"/>
</dbReference>
<dbReference type="InterPro" id="IPR012766">
    <property type="entry name" value="Trehalose_OtsA"/>
</dbReference>
<dbReference type="NCBIfam" id="NF007513">
    <property type="entry name" value="PRK10117.1"/>
    <property type="match status" value="1"/>
</dbReference>
<dbReference type="NCBIfam" id="TIGR02400">
    <property type="entry name" value="trehalose_OtsA"/>
    <property type="match status" value="1"/>
</dbReference>
<dbReference type="PANTHER" id="PTHR10788:SF106">
    <property type="entry name" value="BCDNA.GH08860"/>
    <property type="match status" value="1"/>
</dbReference>
<dbReference type="PANTHER" id="PTHR10788">
    <property type="entry name" value="TREHALOSE-6-PHOSPHATE SYNTHASE"/>
    <property type="match status" value="1"/>
</dbReference>
<dbReference type="Pfam" id="PF00982">
    <property type="entry name" value="Glyco_transf_20"/>
    <property type="match status" value="1"/>
</dbReference>
<dbReference type="SUPFAM" id="SSF53756">
    <property type="entry name" value="UDP-Glycosyltransferase/glycogen phosphorylase"/>
    <property type="match status" value="1"/>
</dbReference>
<proteinExistence type="inferred from homology"/>
<protein>
    <recommendedName>
        <fullName evidence="1">Trehalose-6-phosphate synthase</fullName>
        <shortName evidence="1">TPS</shortName>
        <ecNumber evidence="1">2.4.1.15</ecNumber>
    </recommendedName>
    <alternativeName>
        <fullName evidence="1">Alpha,alpha-trehalose-phosphate synthase [UDP-forming]</fullName>
    </alternativeName>
    <alternativeName>
        <fullName evidence="1">Osmoregulatory trehalose synthesis protein A</fullName>
        <shortName evidence="1">OtsA</shortName>
    </alternativeName>
    <alternativeName>
        <fullName evidence="1">UDP-glucose-glucosephosphate glucosyltransferase</fullName>
    </alternativeName>
</protein>
<sequence>MSRLVVVSNRIAPPDEHAASAGGLAVGILGALKAAGGLWFGWSGETGNEDQPLKKVKKGNITWASFNLSEQDLDEYYNQFSNAVLWPAFHYRLDLVQFQRPAWDGYLRVNALLADKLLPLLQDDDIIWIHDYHLLPFAHELRKRGVNNRIGFLLHIPFPTPEIFNALPTYDTLLEQLCDYDLLGFQTENDRLAFLDCLSNLTRVTTRSAKSHTAWGKAFRTEVYPIGIEPKEIAKQAAGPLPPKLAQLKAELKNVQNIFSVERLDYSKGLPERFLAYEALLEKYPQHHGKIRYTQIAPTSRGDVQAYQDIRHQLENEAGRINGKYGQLGWTPLYYLNQHFDRKLLMKIFRYSDVGLVTPLRDGMNLVAKEYVAAQDPANPGVLVLSQFAGAANELTSALIVNPYDRDEVAAALDRALTMSLAERISRHAEMLDVIVKNDINHWQECFISDLKQIVPRSAESQQRDKVATFPKLA</sequence>
<keyword id="KW-0328">Glycosyltransferase</keyword>
<keyword id="KW-0808">Transferase</keyword>
<evidence type="ECO:0000250" key="1">
    <source>
        <dbReference type="UniProtKB" id="P31677"/>
    </source>
</evidence>
<name>OTSA_PSESS</name>
<organism>
    <name type="scientific">Pseudomonas savastanoi</name>
    <name type="common">Pseudomonas syringae pv. savastanoi</name>
    <dbReference type="NCBI Taxonomy" id="29438"/>
    <lineage>
        <taxon>Bacteria</taxon>
        <taxon>Pseudomonadati</taxon>
        <taxon>Pseudomonadota</taxon>
        <taxon>Gammaproteobacteria</taxon>
        <taxon>Pseudomonadales</taxon>
        <taxon>Pseudomonadaceae</taxon>
        <taxon>Pseudomonas</taxon>
    </lineage>
</organism>
<comment type="function">
    <text evidence="1">Probably involved in the osmoprotection via the biosynthesis of trehalose. Catalyzes the transfer of glucose from UDP-alpha-D-glucose (UDP-Glc) to D-glucose 6-phosphate (Glc-6-P) to form trehalose-6-phosphate. Acts with retention of the anomeric configuration of the UDP-sugar donor.</text>
</comment>
<comment type="catalytic activity">
    <reaction evidence="1">
        <text>D-glucose 6-phosphate + UDP-alpha-D-glucose = alpha,alpha-trehalose 6-phosphate + UDP + H(+)</text>
        <dbReference type="Rhea" id="RHEA:18889"/>
        <dbReference type="ChEBI" id="CHEBI:15378"/>
        <dbReference type="ChEBI" id="CHEBI:58223"/>
        <dbReference type="ChEBI" id="CHEBI:58429"/>
        <dbReference type="ChEBI" id="CHEBI:58885"/>
        <dbReference type="ChEBI" id="CHEBI:61548"/>
        <dbReference type="EC" id="2.4.1.15"/>
    </reaction>
</comment>
<comment type="pathway">
    <text evidence="1">Glycan biosynthesis; trehalose biosynthesis.</text>
</comment>
<comment type="subunit">
    <text evidence="1">Homotetramer.</text>
</comment>
<comment type="similarity">
    <text evidence="1">Belongs to the glycosyltransferase 20 family.</text>
</comment>
<gene>
    <name evidence="1" type="primary">otsA</name>
</gene>
<feature type="chain" id="PRO_0000348914" description="Trehalose-6-phosphate synthase">
    <location>
        <begin position="1"/>
        <end position="474"/>
    </location>
</feature>
<feature type="binding site" evidence="1">
    <location>
        <position position="10"/>
    </location>
    <ligand>
        <name>D-glucose 6-phosphate</name>
        <dbReference type="ChEBI" id="CHEBI:61548"/>
    </ligand>
</feature>
<feature type="binding site" evidence="1">
    <location>
        <begin position="22"/>
        <end position="23"/>
    </location>
    <ligand>
        <name>UDP-alpha-D-glucose</name>
        <dbReference type="ChEBI" id="CHEBI:58885"/>
    </ligand>
</feature>
<feature type="binding site" evidence="1">
    <location>
        <position position="77"/>
    </location>
    <ligand>
        <name>D-glucose 6-phosphate</name>
        <dbReference type="ChEBI" id="CHEBI:61548"/>
    </ligand>
</feature>
<feature type="binding site" evidence="1">
    <location>
        <position position="131"/>
    </location>
    <ligand>
        <name>D-glucose 6-phosphate</name>
        <dbReference type="ChEBI" id="CHEBI:61548"/>
    </ligand>
</feature>
<feature type="binding site" evidence="1">
    <location>
        <position position="263"/>
    </location>
    <ligand>
        <name>UDP-alpha-D-glucose</name>
        <dbReference type="ChEBI" id="CHEBI:58885"/>
    </ligand>
</feature>
<feature type="binding site" evidence="1">
    <location>
        <position position="268"/>
    </location>
    <ligand>
        <name>UDP-alpha-D-glucose</name>
        <dbReference type="ChEBI" id="CHEBI:58885"/>
    </ligand>
</feature>
<feature type="binding site" evidence="1">
    <location>
        <position position="301"/>
    </location>
    <ligand>
        <name>D-glucose 6-phosphate</name>
        <dbReference type="ChEBI" id="CHEBI:61548"/>
    </ligand>
</feature>
<feature type="binding site" evidence="1">
    <location>
        <position position="340"/>
    </location>
    <ligand>
        <name>UDP-alpha-D-glucose</name>
        <dbReference type="ChEBI" id="CHEBI:58885"/>
    </ligand>
</feature>
<feature type="binding site" evidence="1">
    <location>
        <begin position="366"/>
        <end position="370"/>
    </location>
    <ligand>
        <name>UDP-alpha-D-glucose</name>
        <dbReference type="ChEBI" id="CHEBI:58885"/>
    </ligand>
</feature>
<feature type="site" description="Involved in alpha anomer selectivity" evidence="1">
    <location>
        <position position="86"/>
    </location>
</feature>
<feature type="site" description="Involved in alpha anomer selectivity" evidence="1">
    <location>
        <position position="156"/>
    </location>
</feature>